<proteinExistence type="inferred from homology"/>
<feature type="chain" id="PRO_1000051865" description="Small ribosomal subunit protein uS13">
    <location>
        <begin position="1"/>
        <end position="127"/>
    </location>
</feature>
<feature type="region of interest" description="Disordered" evidence="2">
    <location>
        <begin position="95"/>
        <end position="127"/>
    </location>
</feature>
<feature type="compositionally biased region" description="Basic residues" evidence="2">
    <location>
        <begin position="95"/>
        <end position="118"/>
    </location>
</feature>
<gene>
    <name evidence="1" type="primary">rpsM</name>
    <name type="ordered locus">Anae109_1935</name>
</gene>
<accession>A7HBP2</accession>
<dbReference type="EMBL" id="CP000769">
    <property type="protein sequence ID" value="ABS26138.1"/>
    <property type="molecule type" value="Genomic_DNA"/>
</dbReference>
<dbReference type="RefSeq" id="WP_012096716.1">
    <property type="nucleotide sequence ID" value="NC_009675.1"/>
</dbReference>
<dbReference type="SMR" id="A7HBP2"/>
<dbReference type="STRING" id="404589.Anae109_1935"/>
<dbReference type="KEGG" id="afw:Anae109_1935"/>
<dbReference type="eggNOG" id="COG0099">
    <property type="taxonomic scope" value="Bacteria"/>
</dbReference>
<dbReference type="HOGENOM" id="CLU_103849_1_2_7"/>
<dbReference type="OrthoDB" id="9803610at2"/>
<dbReference type="Proteomes" id="UP000006382">
    <property type="component" value="Chromosome"/>
</dbReference>
<dbReference type="GO" id="GO:0005829">
    <property type="term" value="C:cytosol"/>
    <property type="evidence" value="ECO:0007669"/>
    <property type="project" value="TreeGrafter"/>
</dbReference>
<dbReference type="GO" id="GO:0015935">
    <property type="term" value="C:small ribosomal subunit"/>
    <property type="evidence" value="ECO:0007669"/>
    <property type="project" value="TreeGrafter"/>
</dbReference>
<dbReference type="GO" id="GO:0019843">
    <property type="term" value="F:rRNA binding"/>
    <property type="evidence" value="ECO:0007669"/>
    <property type="project" value="UniProtKB-UniRule"/>
</dbReference>
<dbReference type="GO" id="GO:0003735">
    <property type="term" value="F:structural constituent of ribosome"/>
    <property type="evidence" value="ECO:0007669"/>
    <property type="project" value="InterPro"/>
</dbReference>
<dbReference type="GO" id="GO:0000049">
    <property type="term" value="F:tRNA binding"/>
    <property type="evidence" value="ECO:0007669"/>
    <property type="project" value="UniProtKB-UniRule"/>
</dbReference>
<dbReference type="GO" id="GO:0006412">
    <property type="term" value="P:translation"/>
    <property type="evidence" value="ECO:0007669"/>
    <property type="project" value="UniProtKB-UniRule"/>
</dbReference>
<dbReference type="FunFam" id="1.10.8.50:FF:000001">
    <property type="entry name" value="30S ribosomal protein S13"/>
    <property type="match status" value="1"/>
</dbReference>
<dbReference type="FunFam" id="4.10.910.10:FF:000001">
    <property type="entry name" value="30S ribosomal protein S13"/>
    <property type="match status" value="1"/>
</dbReference>
<dbReference type="Gene3D" id="1.10.8.50">
    <property type="match status" value="1"/>
</dbReference>
<dbReference type="Gene3D" id="4.10.910.10">
    <property type="entry name" value="30s ribosomal protein s13, domain 2"/>
    <property type="match status" value="1"/>
</dbReference>
<dbReference type="HAMAP" id="MF_01315">
    <property type="entry name" value="Ribosomal_uS13"/>
    <property type="match status" value="1"/>
</dbReference>
<dbReference type="InterPro" id="IPR027437">
    <property type="entry name" value="Rbsml_uS13_C"/>
</dbReference>
<dbReference type="InterPro" id="IPR001892">
    <property type="entry name" value="Ribosomal_uS13"/>
</dbReference>
<dbReference type="InterPro" id="IPR010979">
    <property type="entry name" value="Ribosomal_uS13-like_H2TH"/>
</dbReference>
<dbReference type="InterPro" id="IPR019980">
    <property type="entry name" value="Ribosomal_uS13_bac-type"/>
</dbReference>
<dbReference type="InterPro" id="IPR018269">
    <property type="entry name" value="Ribosomal_uS13_CS"/>
</dbReference>
<dbReference type="NCBIfam" id="TIGR03631">
    <property type="entry name" value="uS13_bact"/>
    <property type="match status" value="1"/>
</dbReference>
<dbReference type="PANTHER" id="PTHR10871">
    <property type="entry name" value="30S RIBOSOMAL PROTEIN S13/40S RIBOSOMAL PROTEIN S18"/>
    <property type="match status" value="1"/>
</dbReference>
<dbReference type="PANTHER" id="PTHR10871:SF1">
    <property type="entry name" value="SMALL RIBOSOMAL SUBUNIT PROTEIN US13M"/>
    <property type="match status" value="1"/>
</dbReference>
<dbReference type="Pfam" id="PF00416">
    <property type="entry name" value="Ribosomal_S13"/>
    <property type="match status" value="1"/>
</dbReference>
<dbReference type="PIRSF" id="PIRSF002134">
    <property type="entry name" value="Ribosomal_S13"/>
    <property type="match status" value="1"/>
</dbReference>
<dbReference type="SUPFAM" id="SSF46946">
    <property type="entry name" value="S13-like H2TH domain"/>
    <property type="match status" value="1"/>
</dbReference>
<dbReference type="PROSITE" id="PS00646">
    <property type="entry name" value="RIBOSOMAL_S13_1"/>
    <property type="match status" value="1"/>
</dbReference>
<dbReference type="PROSITE" id="PS50159">
    <property type="entry name" value="RIBOSOMAL_S13_2"/>
    <property type="match status" value="1"/>
</dbReference>
<evidence type="ECO:0000255" key="1">
    <source>
        <dbReference type="HAMAP-Rule" id="MF_01315"/>
    </source>
</evidence>
<evidence type="ECO:0000256" key="2">
    <source>
        <dbReference type="SAM" id="MobiDB-lite"/>
    </source>
</evidence>
<evidence type="ECO:0000305" key="3"/>
<protein>
    <recommendedName>
        <fullName evidence="1">Small ribosomal subunit protein uS13</fullName>
    </recommendedName>
    <alternativeName>
        <fullName evidence="3">30S ribosomal protein S13</fullName>
    </alternativeName>
</protein>
<reference key="1">
    <citation type="journal article" date="2015" name="Genome Announc.">
        <title>Complete genome sequence of Anaeromyxobacter sp. Fw109-5, an anaerobic, metal-reducing bacterium isolated from a contaminated subsurface environment.</title>
        <authorList>
            <person name="Hwang C."/>
            <person name="Copeland A."/>
            <person name="Lucas S."/>
            <person name="Lapidus A."/>
            <person name="Barry K."/>
            <person name="Glavina Del Rio T."/>
            <person name="Dalin E."/>
            <person name="Tice H."/>
            <person name="Pitluck S."/>
            <person name="Sims D."/>
            <person name="Brettin T."/>
            <person name="Bruce D.C."/>
            <person name="Detter J.C."/>
            <person name="Han C.S."/>
            <person name="Schmutz J."/>
            <person name="Larimer F.W."/>
            <person name="Land M.L."/>
            <person name="Hauser L.J."/>
            <person name="Kyrpides N."/>
            <person name="Lykidis A."/>
            <person name="Richardson P."/>
            <person name="Belieav A."/>
            <person name="Sanford R.A."/>
            <person name="Loeffler F.E."/>
            <person name="Fields M.W."/>
        </authorList>
    </citation>
    <scope>NUCLEOTIDE SEQUENCE [LARGE SCALE GENOMIC DNA]</scope>
    <source>
        <strain>Fw109-5</strain>
    </source>
</reference>
<name>RS13_ANADF</name>
<organism>
    <name type="scientific">Anaeromyxobacter sp. (strain Fw109-5)</name>
    <dbReference type="NCBI Taxonomy" id="404589"/>
    <lineage>
        <taxon>Bacteria</taxon>
        <taxon>Pseudomonadati</taxon>
        <taxon>Myxococcota</taxon>
        <taxon>Myxococcia</taxon>
        <taxon>Myxococcales</taxon>
        <taxon>Cystobacterineae</taxon>
        <taxon>Anaeromyxobacteraceae</taxon>
        <taxon>Anaeromyxobacter</taxon>
    </lineage>
</organism>
<keyword id="KW-1185">Reference proteome</keyword>
<keyword id="KW-0687">Ribonucleoprotein</keyword>
<keyword id="KW-0689">Ribosomal protein</keyword>
<keyword id="KW-0694">RNA-binding</keyword>
<keyword id="KW-0699">rRNA-binding</keyword>
<keyword id="KW-0820">tRNA-binding</keyword>
<comment type="function">
    <text evidence="1">Located at the top of the head of the 30S subunit, it contacts several helices of the 16S rRNA. In the 70S ribosome it contacts the 23S rRNA (bridge B1a) and protein L5 of the 50S subunit (bridge B1b), connecting the 2 subunits; these bridges are implicated in subunit movement. Contacts the tRNAs in the A and P-sites.</text>
</comment>
<comment type="subunit">
    <text evidence="1">Part of the 30S ribosomal subunit. Forms a loose heterodimer with protein S19. Forms two bridges to the 50S subunit in the 70S ribosome.</text>
</comment>
<comment type="similarity">
    <text evidence="1">Belongs to the universal ribosomal protein uS13 family.</text>
</comment>
<sequence length="127" mass="14379">MARIAGVDLPREKRIEVALQYIYGIGKTTAQAICHRANVDVTTRTKDLTDDEVRRIRETIEQAVKVEGDLRREISLNIKRLMDLGCYRGLRHRKGLPVRGQRTHTNARTRKGPKKGLVRKAAAPAPK</sequence>